<proteinExistence type="evidence at protein level"/>
<evidence type="ECO:0000269" key="1">
    <source>
    </source>
</evidence>
<evidence type="ECO:0000269" key="2">
    <source>
    </source>
</evidence>
<evidence type="ECO:0000303" key="3">
    <source>
    </source>
</evidence>
<evidence type="ECO:0000305" key="4"/>
<evidence type="ECO:0000305" key="5">
    <source>
    </source>
</evidence>
<evidence type="ECO:0000312" key="6">
    <source>
        <dbReference type="EMBL" id="EDN77081.1"/>
    </source>
</evidence>
<evidence type="ECO:0007744" key="7">
    <source>
        <dbReference type="PDB" id="6Z3B"/>
    </source>
</evidence>
<evidence type="ECO:0007744" key="8">
    <source>
        <dbReference type="PDB" id="6Z3C"/>
    </source>
</evidence>
<evidence type="ECO:0007829" key="9">
    <source>
        <dbReference type="PDB" id="6Z3B"/>
    </source>
</evidence>
<reference key="1">
    <citation type="submission" date="2007-04" db="EMBL/GenBank/DDBJ databases">
        <authorList>
            <person name="Fulton L."/>
            <person name="Clifton S."/>
            <person name="Fulton B."/>
            <person name="Xu J."/>
            <person name="Minx P."/>
            <person name="Pepin K.H."/>
            <person name="Johnson M."/>
            <person name="Thiruvilangam P."/>
            <person name="Bhonagiri V."/>
            <person name="Nash W.E."/>
            <person name="Mardis E.R."/>
            <person name="Wilson R.K."/>
        </authorList>
    </citation>
    <scope>NUCLEOTIDE SEQUENCE [LARGE SCALE GENOMIC DNA]</scope>
    <source>
        <strain>ATCC 29149 / DSM 114966 / JCM 6515 / VPI C7-9</strain>
    </source>
</reference>
<reference key="2">
    <citation type="submission" date="2007-06" db="EMBL/GenBank/DDBJ databases">
        <title>Draft genome sequence of Ruminococcus gnavus (ATCC 29149).</title>
        <authorList>
            <person name="Sudarsanam P."/>
            <person name="Ley R."/>
            <person name="Guruge J."/>
            <person name="Turnbaugh P.J."/>
            <person name="Mahowald M."/>
            <person name="Liep D."/>
            <person name="Gordon J."/>
        </authorList>
    </citation>
    <scope>NUCLEOTIDE SEQUENCE [LARGE SCALE GENOMIC DNA]</scope>
    <source>
        <strain>ATCC 29149 / DSM 114966 / JCM 6515 / VPI C7-9</strain>
    </source>
</reference>
<reference key="3">
    <citation type="journal article" date="2019" name="Nat. Microbiol.">
        <title>Elucidation of a sialic acid metabolism pathway in mucus-foraging Ruminococcus gnavus unravels mechanisms of bacterial adaptation to the gut.</title>
        <authorList>
            <person name="Bell A."/>
            <person name="Brunt J."/>
            <person name="Crost E."/>
            <person name="Vaux L."/>
            <person name="Nepravishta R."/>
            <person name="Owen C.D."/>
            <person name="Latousakis D."/>
            <person name="Xiao A."/>
            <person name="Li W."/>
            <person name="Chen X."/>
            <person name="Walsh M.A."/>
            <person name="Claesen J."/>
            <person name="Angulo J."/>
            <person name="Thomas G.H."/>
            <person name="Juge N."/>
        </authorList>
    </citation>
    <scope>FUNCTION</scope>
    <scope>ACTIVITY REGULATION</scope>
    <scope>BIOPHYSICOCHEMICAL PROPERTIES</scope>
    <scope>INDUCTION</scope>
    <scope>DISRUPTION PHENOTYPE</scope>
    <source>
        <strain>ATCC 29149 / DSM 114966 / JCM 6515 / VPI C7-9</strain>
    </source>
</reference>
<reference evidence="7 8" key="4">
    <citation type="journal article" date="2020" name="J. Biol. Chem.">
        <title>Uncovering a novel molecular mechanism for scavenging sialic acids in bacteria.</title>
        <authorList>
            <person name="Bell A."/>
            <person name="Severi E."/>
            <person name="Lee M."/>
            <person name="Monaco S."/>
            <person name="Latousakis D."/>
            <person name="Angulo J."/>
            <person name="Thomas G.H."/>
            <person name="Naismith J.H."/>
            <person name="Juge N."/>
        </authorList>
    </citation>
    <scope>X-RAY CRYSTALLOGRAPHY (1.74 ANGSTROMS) IN COMPLEX WITH NAD(+)</scope>
    <scope>FUNCTION</scope>
    <scope>CATALYTIC ACTIVITY</scope>
    <scope>REACTION MECHANISM</scope>
    <scope>COFACTOR</scope>
    <scope>SUBUNIT</scope>
    <scope>MUTAGENESIS OF LYS-93; LYS-163; HIS-175; HIS-176 AND HIS-178</scope>
    <source>
        <strain>ATCC 29149 / DSM 114966 / JCM 6515 / VPI C7-9</strain>
    </source>
</reference>
<dbReference type="EC" id="4.2.1.-" evidence="2"/>
<dbReference type="EMBL" id="AAYG02000020">
    <property type="protein sequence ID" value="EDN77081.1"/>
    <property type="molecule type" value="Genomic_DNA"/>
</dbReference>
<dbReference type="RefSeq" id="WP_004843633.1">
    <property type="nucleotide sequence ID" value="NZ_PUEL01000004.1"/>
</dbReference>
<dbReference type="PDB" id="6Z3B">
    <property type="method" value="X-ray"/>
    <property type="resolution" value="2.58 A"/>
    <property type="chains" value="A=1-372, B=1-369"/>
</dbReference>
<dbReference type="PDB" id="6Z3C">
    <property type="method" value="X-ray"/>
    <property type="resolution" value="1.74 A"/>
    <property type="chains" value="AAA/BBB=1-374"/>
</dbReference>
<dbReference type="PDBsum" id="6Z3B"/>
<dbReference type="PDBsum" id="6Z3C"/>
<dbReference type="SMR" id="A7B558"/>
<dbReference type="PaxDb" id="411470-RUMGNA_02695"/>
<dbReference type="eggNOG" id="COG0673">
    <property type="taxonomic scope" value="Bacteria"/>
</dbReference>
<dbReference type="Proteomes" id="UP000004410">
    <property type="component" value="Unassembled WGS sequence"/>
</dbReference>
<dbReference type="GO" id="GO:0016829">
    <property type="term" value="F:lyase activity"/>
    <property type="evidence" value="ECO:0007669"/>
    <property type="project" value="UniProtKB-KW"/>
</dbReference>
<dbReference type="GO" id="GO:0000166">
    <property type="term" value="F:nucleotide binding"/>
    <property type="evidence" value="ECO:0007669"/>
    <property type="project" value="InterPro"/>
</dbReference>
<dbReference type="Gene3D" id="3.30.360.10">
    <property type="entry name" value="Dihydrodipicolinate Reductase, domain 2"/>
    <property type="match status" value="1"/>
</dbReference>
<dbReference type="Gene3D" id="3.40.50.720">
    <property type="entry name" value="NAD(P)-binding Rossmann-like Domain"/>
    <property type="match status" value="1"/>
</dbReference>
<dbReference type="InterPro" id="IPR004104">
    <property type="entry name" value="Gfo/Idh/MocA-like_OxRdtase_C"/>
</dbReference>
<dbReference type="InterPro" id="IPR000683">
    <property type="entry name" value="Gfo/Idh/MocA-like_OxRdtase_N"/>
</dbReference>
<dbReference type="InterPro" id="IPR051450">
    <property type="entry name" value="Gfo/Idh/MocA_Oxidoreductases"/>
</dbReference>
<dbReference type="InterPro" id="IPR036291">
    <property type="entry name" value="NAD(P)-bd_dom_sf"/>
</dbReference>
<dbReference type="PANTHER" id="PTHR43377">
    <property type="entry name" value="BILIVERDIN REDUCTASE A"/>
    <property type="match status" value="1"/>
</dbReference>
<dbReference type="PANTHER" id="PTHR43377:SF1">
    <property type="entry name" value="BILIVERDIN REDUCTASE A"/>
    <property type="match status" value="1"/>
</dbReference>
<dbReference type="Pfam" id="PF01408">
    <property type="entry name" value="GFO_IDH_MocA"/>
    <property type="match status" value="1"/>
</dbReference>
<dbReference type="Pfam" id="PF02894">
    <property type="entry name" value="GFO_IDH_MocA_C"/>
    <property type="match status" value="1"/>
</dbReference>
<dbReference type="SUPFAM" id="SSF55347">
    <property type="entry name" value="Glyceraldehyde-3-phosphate dehydrogenase-like, C-terminal domain"/>
    <property type="match status" value="1"/>
</dbReference>
<dbReference type="SUPFAM" id="SSF51735">
    <property type="entry name" value="NAD(P)-binding Rossmann-fold domains"/>
    <property type="match status" value="1"/>
</dbReference>
<name>NANY_MEDG7</name>
<protein>
    <recommendedName>
        <fullName evidence="4">2,7-anhydro-N-acetylneuraminate hydratase</fullName>
        <ecNumber evidence="2">4.2.1.-</ecNumber>
    </recommendedName>
    <alternativeName>
        <fullName evidence="3">RgNanOx</fullName>
    </alternativeName>
</protein>
<accession>A7B558</accession>
<keyword id="KW-0002">3D-structure</keyword>
<keyword id="KW-0456">Lyase</keyword>
<keyword id="KW-0520">NAD</keyword>
<sequence>MKTVGYAIVGTGYFGAELGRIMKEQEGARIVAVLDPENGQTIAEELDCDVETDLDTLYSREDVEAVIVATPNYLHKEPVIKAAEHGVNVFCEKPIALSYQDCDEMVRTCQEHGVIFMAGHVMNFFHGVRYAKKLINDGVIGKVLYCHSARNGWEEQQPTISWKKIREKSGGHLYHHIHELDCVQFLMGGMPEEVTMTGGNVAHQGEAFGDEDDMLFVNMQFSDNRYAVLEWGSAFHWPEHYVLIQGTKGAIKIDMCDCGGTLKVDGREEHFLVHESQEEDDDRTRIYHGTEMDGAIMYGKPGKKPPMWLHSIMKNEMKYLNGILHGKEVDDEFRPLLTGEAARAAIATADACTKSRFEDRKVKLSEIIGEGSTI</sequence>
<feature type="chain" id="PRO_0000460003" description="2,7-anhydro-N-acetylneuraminate hydratase">
    <location>
        <begin position="1"/>
        <end position="374"/>
    </location>
</feature>
<feature type="binding site" evidence="2 7 8">
    <location>
        <position position="13"/>
    </location>
    <ligand>
        <name>NAD(+)</name>
        <dbReference type="ChEBI" id="CHEBI:57540"/>
    </ligand>
</feature>
<feature type="binding site" evidence="2 7 8">
    <location>
        <position position="14"/>
    </location>
    <ligand>
        <name>NAD(+)</name>
        <dbReference type="ChEBI" id="CHEBI:57540"/>
    </ligand>
</feature>
<feature type="binding site" evidence="2 7 8">
    <location>
        <position position="35"/>
    </location>
    <ligand>
        <name>NAD(+)</name>
        <dbReference type="ChEBI" id="CHEBI:57540"/>
    </ligand>
</feature>
<feature type="binding site" evidence="2 7 8">
    <location>
        <position position="38"/>
    </location>
    <ligand>
        <name>NAD(+)</name>
        <dbReference type="ChEBI" id="CHEBI:57540"/>
    </ligand>
</feature>
<feature type="binding site" evidence="2 7 8">
    <location>
        <position position="70"/>
    </location>
    <ligand>
        <name>NAD(+)</name>
        <dbReference type="ChEBI" id="CHEBI:57540"/>
    </ligand>
</feature>
<feature type="binding site" evidence="2 7 8">
    <location>
        <position position="72"/>
    </location>
    <ligand>
        <name>NAD(+)</name>
        <dbReference type="ChEBI" id="CHEBI:57540"/>
    </ligand>
</feature>
<feature type="binding site" evidence="2 7 8">
    <location>
        <position position="75"/>
    </location>
    <ligand>
        <name>NAD(+)</name>
        <dbReference type="ChEBI" id="CHEBI:57540"/>
    </ligand>
</feature>
<feature type="binding site" evidence="2 7 8">
    <location>
        <position position="92"/>
    </location>
    <ligand>
        <name>NAD(+)</name>
        <dbReference type="ChEBI" id="CHEBI:57540"/>
    </ligand>
</feature>
<feature type="binding site" evidence="2 7 8">
    <location>
        <position position="93"/>
    </location>
    <ligand>
        <name>NAD(+)</name>
        <dbReference type="ChEBI" id="CHEBI:57540"/>
    </ligand>
</feature>
<feature type="binding site" evidence="2 7 8">
    <location>
        <position position="162"/>
    </location>
    <ligand>
        <name>NAD(+)</name>
        <dbReference type="ChEBI" id="CHEBI:57540"/>
    </ligand>
</feature>
<feature type="binding site" evidence="2 7 8">
    <location>
        <position position="163"/>
    </location>
    <ligand>
        <name>NAD(+)</name>
        <dbReference type="ChEBI" id="CHEBI:57540"/>
    </ligand>
</feature>
<feature type="mutagenesis site" description="Loss of activity. Loses the ability to bind NAD(+)." evidence="2">
    <original>K</original>
    <variation>A</variation>
    <location>
        <position position="93"/>
    </location>
</feature>
<feature type="mutagenesis site" description="Loss of activity." evidence="2">
    <original>K</original>
    <variation>A</variation>
    <location>
        <position position="163"/>
    </location>
</feature>
<feature type="mutagenesis site" description="Loss of activity." evidence="2">
    <original>H</original>
    <variation>A</variation>
    <location>
        <position position="175"/>
    </location>
</feature>
<feature type="mutagenesis site" description="Loss of activity. Loses the ability to bind NAD(+)." evidence="2">
    <original>H</original>
    <variation>A</variation>
    <location>
        <position position="176"/>
    </location>
</feature>
<feature type="mutagenesis site" description="Loss of activity." evidence="2">
    <original>H</original>
    <variation>A</variation>
    <location>
        <position position="178"/>
    </location>
</feature>
<feature type="strand" evidence="9">
    <location>
        <begin position="4"/>
        <end position="9"/>
    </location>
</feature>
<feature type="helix" evidence="9">
    <location>
        <begin position="13"/>
        <end position="23"/>
    </location>
</feature>
<feature type="strand" evidence="9">
    <location>
        <begin position="28"/>
        <end position="34"/>
    </location>
</feature>
<feature type="turn" evidence="9">
    <location>
        <begin position="36"/>
        <end position="38"/>
    </location>
</feature>
<feature type="helix" evidence="9">
    <location>
        <begin position="39"/>
        <end position="46"/>
    </location>
</feature>
<feature type="helix" evidence="9">
    <location>
        <begin position="54"/>
        <end position="59"/>
    </location>
</feature>
<feature type="strand" evidence="9">
    <location>
        <begin position="65"/>
        <end position="68"/>
    </location>
</feature>
<feature type="helix" evidence="9">
    <location>
        <begin position="72"/>
        <end position="74"/>
    </location>
</feature>
<feature type="helix" evidence="9">
    <location>
        <begin position="76"/>
        <end position="84"/>
    </location>
</feature>
<feature type="strand" evidence="9">
    <location>
        <begin position="88"/>
        <end position="95"/>
    </location>
</feature>
<feature type="helix" evidence="9">
    <location>
        <begin position="99"/>
        <end position="111"/>
    </location>
</feature>
<feature type="strand" evidence="9">
    <location>
        <begin position="116"/>
        <end position="119"/>
    </location>
</feature>
<feature type="helix" evidence="9">
    <location>
        <begin position="121"/>
        <end position="124"/>
    </location>
</feature>
<feature type="helix" evidence="9">
    <location>
        <begin position="126"/>
        <end position="137"/>
    </location>
</feature>
<feature type="turn" evidence="9">
    <location>
        <begin position="138"/>
        <end position="140"/>
    </location>
</feature>
<feature type="strand" evidence="9">
    <location>
        <begin position="142"/>
        <end position="153"/>
    </location>
</feature>
<feature type="helix" evidence="9">
    <location>
        <begin position="162"/>
        <end position="164"/>
    </location>
</feature>
<feature type="helix" evidence="9">
    <location>
        <begin position="166"/>
        <end position="169"/>
    </location>
</feature>
<feature type="helix" evidence="9">
    <location>
        <begin position="171"/>
        <end position="175"/>
    </location>
</feature>
<feature type="helix" evidence="9">
    <location>
        <begin position="178"/>
        <end position="187"/>
    </location>
</feature>
<feature type="strand" evidence="9">
    <location>
        <begin position="192"/>
        <end position="199"/>
    </location>
</feature>
<feature type="strand" evidence="9">
    <location>
        <begin position="213"/>
        <end position="221"/>
    </location>
</feature>
<feature type="turn" evidence="9">
    <location>
        <begin position="222"/>
        <end position="224"/>
    </location>
</feature>
<feature type="strand" evidence="9">
    <location>
        <begin position="225"/>
        <end position="254"/>
    </location>
</feature>
<feature type="turn" evidence="9">
    <location>
        <begin position="255"/>
        <end position="258"/>
    </location>
</feature>
<feature type="strand" evidence="9">
    <location>
        <begin position="259"/>
        <end position="264"/>
    </location>
</feature>
<feature type="strand" evidence="9">
    <location>
        <begin position="267"/>
        <end position="271"/>
    </location>
</feature>
<feature type="strand" evidence="9">
    <location>
        <begin position="273"/>
        <end position="276"/>
    </location>
</feature>
<feature type="helix" evidence="9">
    <location>
        <begin position="277"/>
        <end position="289"/>
    </location>
</feature>
<feature type="helix" evidence="9">
    <location>
        <begin position="294"/>
        <end position="297"/>
    </location>
</feature>
<feature type="helix" evidence="9">
    <location>
        <begin position="307"/>
        <end position="323"/>
    </location>
</feature>
<feature type="turn" evidence="9">
    <location>
        <begin position="324"/>
        <end position="326"/>
    </location>
</feature>
<feature type="turn" evidence="9">
    <location>
        <begin position="331"/>
        <end position="333"/>
    </location>
</feature>
<feature type="helix" evidence="9">
    <location>
        <begin position="334"/>
        <end position="336"/>
    </location>
</feature>
<feature type="helix" evidence="9">
    <location>
        <begin position="340"/>
        <end position="358"/>
    </location>
</feature>
<feature type="helix" evidence="9">
    <location>
        <begin position="364"/>
        <end position="366"/>
    </location>
</feature>
<gene>
    <name evidence="6" type="ORF">RUMGNA_02695</name>
</gene>
<organism>
    <name type="scientific">Mediterraneibacter gnavus (strain ATCC 29149 / DSM 114966 / JCM 6515 / VPI C7-9)</name>
    <name type="common">Ruminococcus gnavus</name>
    <dbReference type="NCBI Taxonomy" id="411470"/>
    <lineage>
        <taxon>Bacteria</taxon>
        <taxon>Bacillati</taxon>
        <taxon>Bacillota</taxon>
        <taxon>Clostridia</taxon>
        <taxon>Lachnospirales</taxon>
        <taxon>Lachnospiraceae</taxon>
        <taxon>Mediterraneibacter</taxon>
    </lineage>
</organism>
<comment type="function">
    <text evidence="1 2">Hydratase involved in the degradation of sialic acids, which are present in the host mucus layer and represent a much-coveted source of nutrients for R.gnavus, a prevalent member of the normal gut microbiota (PubMed:31636419, PubMed:32669363). Catalyzes the reversible conversion of the dehydrated form of N-acetylneuraminate (Neu5Ac), 2,7-anhydro-N-acetylneuraminate (2,7-AN), to Neu5Ac, allowing growth on 2,7-AN produced by the IT-sialidase NanH (PubMed:31636419, PubMed:32669363). Acts through a multistep mechanism involving a keto intermediate and cycling of NADH/NAD(+) (PubMed:32669363).</text>
</comment>
<comment type="catalytic activity">
    <reaction evidence="2">
        <text>N-acetyl-2,7-anhydro-alpha-neuraminate + H2O = N-acetyl-alpha-neuraminate</text>
        <dbReference type="Rhea" id="RHEA:78519"/>
        <dbReference type="ChEBI" id="CHEBI:15377"/>
        <dbReference type="ChEBI" id="CHEBI:58770"/>
        <dbReference type="ChEBI" id="CHEBI:229228"/>
    </reaction>
</comment>
<comment type="cofactor">
    <cofactor evidence="2">
        <name>NAD(+)</name>
        <dbReference type="ChEBI" id="CHEBI:57540"/>
    </cofactor>
    <text evidence="2">Binds 1 NAD(+) per subunit.</text>
</comment>
<comment type="activity regulation">
    <text evidence="1">Neu5Ac is produced in the presence of NAD(+) or NADH, but not in the presence of FAD.</text>
</comment>
<comment type="biophysicochemical properties">
    <kinetics>
        <KM evidence="1">0.074 mM for 2,7-AN</KM>
        <text evidence="1">kcat is 0.0824 sec(-1).</text>
    </kinetics>
</comment>
<comment type="subunit">
    <text evidence="2">Homodimer.</text>
</comment>
<comment type="induction">
    <text evidence="1">Induced in the presence of 2,7-anhydro-Neu5Ac or alpha2-3-sialyllactose (3'SL).</text>
</comment>
<comment type="disruption phenotype">
    <text evidence="1">Deletion of the nan cluster abolishes the ability to grow on sialylated substrates (PubMed:31636419). The fitness of the nan mutant is significantly impaired, with a reduced ability to colonize the mucus layer in monocolonized mice (PubMed:31636419).</text>
</comment>
<comment type="similarity">
    <text evidence="5">Belongs to the Gfo/Idh/MocA family.</text>
</comment>